<proteinExistence type="inferred from homology"/>
<evidence type="ECO:0000250" key="1">
    <source>
        <dbReference type="UniProtKB" id="Q5EHP3"/>
    </source>
</evidence>
<evidence type="ECO:0000255" key="2"/>
<evidence type="ECO:0000303" key="3">
    <source>
    </source>
</evidence>
<evidence type="ECO:0000305" key="4"/>
<evidence type="ECO:0000305" key="5">
    <source>
    </source>
</evidence>
<evidence type="ECO:0000312" key="6">
    <source>
        <dbReference type="EMBL" id="AUJ88063.1"/>
    </source>
</evidence>
<keyword id="KW-0165">Cleavage on pair of basic residues</keyword>
<keyword id="KW-1015">Disulfide bond</keyword>
<keyword id="KW-0964">Secreted</keyword>
<keyword id="KW-0732">Signal</keyword>
<keyword id="KW-0800">Toxin</keyword>
<dbReference type="EMBL" id="MF588939">
    <property type="protein sequence ID" value="AUJ88063.1"/>
    <property type="molecule type" value="mRNA"/>
</dbReference>
<dbReference type="GO" id="GO:0005576">
    <property type="term" value="C:extracellular region"/>
    <property type="evidence" value="ECO:0007669"/>
    <property type="project" value="UniProtKB-SubCell"/>
</dbReference>
<dbReference type="GO" id="GO:0090729">
    <property type="term" value="F:toxin activity"/>
    <property type="evidence" value="ECO:0007669"/>
    <property type="project" value="UniProtKB-KW"/>
</dbReference>
<sequence>MMFKLGVLLTICLLLFPLTGTALDGDQLAEHMLDISSGINDRWFDPVRKCCMRPVCTCPCCS</sequence>
<name>CM35_CONRE</name>
<organism>
    <name type="scientific">Conus regius</name>
    <name type="common">Crown cone</name>
    <dbReference type="NCBI Taxonomy" id="101314"/>
    <lineage>
        <taxon>Eukaryota</taxon>
        <taxon>Metazoa</taxon>
        <taxon>Spiralia</taxon>
        <taxon>Lophotrochozoa</taxon>
        <taxon>Mollusca</taxon>
        <taxon>Gastropoda</taxon>
        <taxon>Caenogastropoda</taxon>
        <taxon>Neogastropoda</taxon>
        <taxon>Conoidea</taxon>
        <taxon>Conidae</taxon>
        <taxon>Conus</taxon>
        <taxon>Stephanoconus</taxon>
    </lineage>
</organism>
<accession>A0A2I6EDL3</accession>
<feature type="signal peptide" evidence="2">
    <location>
        <begin position="1"/>
        <end position="22"/>
    </location>
</feature>
<feature type="propeptide" id="PRO_0000444772" evidence="5">
    <location>
        <begin position="23"/>
        <end position="49"/>
    </location>
</feature>
<feature type="peptide" id="PRO_5014445366" description="Conotoxin reg3.5" evidence="5">
    <location>
        <begin position="50"/>
        <end position="62"/>
    </location>
</feature>
<feature type="disulfide bond" evidence="1">
    <location>
        <begin position="50"/>
        <end position="60"/>
    </location>
</feature>
<feature type="disulfide bond" evidence="1">
    <location>
        <begin position="51"/>
        <end position="58"/>
    </location>
</feature>
<feature type="disulfide bond" evidence="1">
    <location>
        <begin position="56"/>
        <end position="61"/>
    </location>
</feature>
<protein>
    <recommendedName>
        <fullName evidence="3">Conotoxin reg3.5</fullName>
        <shortName evidence="6">Rg3.5</shortName>
    </recommendedName>
</protein>
<reference key="1">
    <citation type="journal article" date="2017" name="FEBS J.">
        <title>Structural plasticity of Mini-M conotoxins: expression of all mini-M subtypes by Conus regius.</title>
        <authorList>
            <person name="Franco A."/>
            <person name="Dovell S."/>
            <person name="Moller C."/>
            <person name="Grandal M."/>
            <person name="Clark E."/>
            <person name="Mari F."/>
        </authorList>
    </citation>
    <scope>NUCLEOTIDE SEQUENCE [MRNA]</scope>
    <source>
        <tissue>Venom duct</tissue>
    </source>
</reference>
<comment type="subcellular location">
    <subcellularLocation>
        <location evidence="5">Secreted</location>
    </subcellularLocation>
</comment>
<comment type="tissue specificity">
    <text evidence="5">Expressed by the venom duct.</text>
</comment>
<comment type="domain">
    <text evidence="4">The cysteine framework is III (CC-C-C-CC). Classified in the M-1 branch, since 1 residue stands between the fourth and the fifth cysteine residues.</text>
</comment>
<comment type="similarity">
    <text evidence="4">Belongs to the conotoxin M superfamily.</text>
</comment>